<proteinExistence type="inferred from homology"/>
<gene>
    <name evidence="1" type="primary">coaA</name>
    <name type="ordered locus">SPA3978</name>
</gene>
<name>COAA_SALPA</name>
<reference key="1">
    <citation type="journal article" date="2004" name="Nat. Genet.">
        <title>Comparison of genome degradation in Paratyphi A and Typhi, human-restricted serovars of Salmonella enterica that cause typhoid.</title>
        <authorList>
            <person name="McClelland M."/>
            <person name="Sanderson K.E."/>
            <person name="Clifton S.W."/>
            <person name="Latreille P."/>
            <person name="Porwollik S."/>
            <person name="Sabo A."/>
            <person name="Meyer R."/>
            <person name="Bieri T."/>
            <person name="Ozersky P."/>
            <person name="McLellan M."/>
            <person name="Harkins C.R."/>
            <person name="Wang C."/>
            <person name="Nguyen C."/>
            <person name="Berghoff A."/>
            <person name="Elliott G."/>
            <person name="Kohlberg S."/>
            <person name="Strong C."/>
            <person name="Du F."/>
            <person name="Carter J."/>
            <person name="Kremizki C."/>
            <person name="Layman D."/>
            <person name="Leonard S."/>
            <person name="Sun H."/>
            <person name="Fulton L."/>
            <person name="Nash W."/>
            <person name="Miner T."/>
            <person name="Minx P."/>
            <person name="Delehaunty K."/>
            <person name="Fronick C."/>
            <person name="Magrini V."/>
            <person name="Nhan M."/>
            <person name="Warren W."/>
            <person name="Florea L."/>
            <person name="Spieth J."/>
            <person name="Wilson R.K."/>
        </authorList>
    </citation>
    <scope>NUCLEOTIDE SEQUENCE [LARGE SCALE GENOMIC DNA]</scope>
    <source>
        <strain>ATCC 9150 / SARB42</strain>
    </source>
</reference>
<comment type="catalytic activity">
    <reaction evidence="1">
        <text>(R)-pantothenate + ATP = (R)-4'-phosphopantothenate + ADP + H(+)</text>
        <dbReference type="Rhea" id="RHEA:16373"/>
        <dbReference type="ChEBI" id="CHEBI:10986"/>
        <dbReference type="ChEBI" id="CHEBI:15378"/>
        <dbReference type="ChEBI" id="CHEBI:29032"/>
        <dbReference type="ChEBI" id="CHEBI:30616"/>
        <dbReference type="ChEBI" id="CHEBI:456216"/>
        <dbReference type="EC" id="2.7.1.33"/>
    </reaction>
</comment>
<comment type="pathway">
    <text evidence="1">Cofactor biosynthesis; coenzyme A biosynthesis; CoA from (R)-pantothenate: step 1/5.</text>
</comment>
<comment type="subcellular location">
    <subcellularLocation>
        <location evidence="1">Cytoplasm</location>
    </subcellularLocation>
</comment>
<comment type="similarity">
    <text evidence="1">Belongs to the prokaryotic pantothenate kinase family.</text>
</comment>
<feature type="chain" id="PRO_1000043247" description="Pantothenate kinase">
    <location>
        <begin position="1"/>
        <end position="316"/>
    </location>
</feature>
<feature type="binding site" evidence="1">
    <location>
        <begin position="95"/>
        <end position="102"/>
    </location>
    <ligand>
        <name>ATP</name>
        <dbReference type="ChEBI" id="CHEBI:30616"/>
    </ligand>
</feature>
<keyword id="KW-0067">ATP-binding</keyword>
<keyword id="KW-0173">Coenzyme A biosynthesis</keyword>
<keyword id="KW-0963">Cytoplasm</keyword>
<keyword id="KW-0418">Kinase</keyword>
<keyword id="KW-0547">Nucleotide-binding</keyword>
<keyword id="KW-0808">Transferase</keyword>
<accession>Q5PK80</accession>
<evidence type="ECO:0000255" key="1">
    <source>
        <dbReference type="HAMAP-Rule" id="MF_00215"/>
    </source>
</evidence>
<organism>
    <name type="scientific">Salmonella paratyphi A (strain ATCC 9150 / SARB42)</name>
    <dbReference type="NCBI Taxonomy" id="295319"/>
    <lineage>
        <taxon>Bacteria</taxon>
        <taxon>Pseudomonadati</taxon>
        <taxon>Pseudomonadota</taxon>
        <taxon>Gammaproteobacteria</taxon>
        <taxon>Enterobacterales</taxon>
        <taxon>Enterobacteriaceae</taxon>
        <taxon>Salmonella</taxon>
    </lineage>
</organism>
<protein>
    <recommendedName>
        <fullName evidence="1">Pantothenate kinase</fullName>
        <ecNumber evidence="1">2.7.1.33</ecNumber>
    </recommendedName>
    <alternativeName>
        <fullName evidence="1">Pantothenic acid kinase</fullName>
    </alternativeName>
</protein>
<dbReference type="EC" id="2.7.1.33" evidence="1"/>
<dbReference type="EMBL" id="CP000026">
    <property type="protein sequence ID" value="AAV79734.1"/>
    <property type="molecule type" value="Genomic_DNA"/>
</dbReference>
<dbReference type="RefSeq" id="WP_000023068.1">
    <property type="nucleotide sequence ID" value="NC_006511.1"/>
</dbReference>
<dbReference type="SMR" id="Q5PK80"/>
<dbReference type="KEGG" id="spt:SPA3978"/>
<dbReference type="HOGENOM" id="CLU_053818_1_1_6"/>
<dbReference type="UniPathway" id="UPA00241">
    <property type="reaction ID" value="UER00352"/>
</dbReference>
<dbReference type="Proteomes" id="UP000008185">
    <property type="component" value="Chromosome"/>
</dbReference>
<dbReference type="GO" id="GO:0005737">
    <property type="term" value="C:cytoplasm"/>
    <property type="evidence" value="ECO:0007669"/>
    <property type="project" value="UniProtKB-SubCell"/>
</dbReference>
<dbReference type="GO" id="GO:0005524">
    <property type="term" value="F:ATP binding"/>
    <property type="evidence" value="ECO:0007669"/>
    <property type="project" value="UniProtKB-UniRule"/>
</dbReference>
<dbReference type="GO" id="GO:0004594">
    <property type="term" value="F:pantothenate kinase activity"/>
    <property type="evidence" value="ECO:0007669"/>
    <property type="project" value="UniProtKB-UniRule"/>
</dbReference>
<dbReference type="GO" id="GO:0015937">
    <property type="term" value="P:coenzyme A biosynthetic process"/>
    <property type="evidence" value="ECO:0007669"/>
    <property type="project" value="UniProtKB-UniRule"/>
</dbReference>
<dbReference type="CDD" id="cd02025">
    <property type="entry name" value="PanK"/>
    <property type="match status" value="1"/>
</dbReference>
<dbReference type="FunFam" id="3.40.50.300:FF:000242">
    <property type="entry name" value="Pantothenate kinase"/>
    <property type="match status" value="1"/>
</dbReference>
<dbReference type="Gene3D" id="3.40.50.300">
    <property type="entry name" value="P-loop containing nucleotide triphosphate hydrolases"/>
    <property type="match status" value="1"/>
</dbReference>
<dbReference type="HAMAP" id="MF_00215">
    <property type="entry name" value="Pantothen_kinase_1"/>
    <property type="match status" value="1"/>
</dbReference>
<dbReference type="InterPro" id="IPR027417">
    <property type="entry name" value="P-loop_NTPase"/>
</dbReference>
<dbReference type="InterPro" id="IPR004566">
    <property type="entry name" value="PanK"/>
</dbReference>
<dbReference type="InterPro" id="IPR006083">
    <property type="entry name" value="PRK/URK"/>
</dbReference>
<dbReference type="NCBIfam" id="TIGR00554">
    <property type="entry name" value="panK_bact"/>
    <property type="match status" value="1"/>
</dbReference>
<dbReference type="PANTHER" id="PTHR10285">
    <property type="entry name" value="URIDINE KINASE"/>
    <property type="match status" value="1"/>
</dbReference>
<dbReference type="Pfam" id="PF00485">
    <property type="entry name" value="PRK"/>
    <property type="match status" value="1"/>
</dbReference>
<dbReference type="PIRSF" id="PIRSF000545">
    <property type="entry name" value="Pantothenate_kin"/>
    <property type="match status" value="1"/>
</dbReference>
<dbReference type="SUPFAM" id="SSF52540">
    <property type="entry name" value="P-loop containing nucleoside triphosphate hydrolases"/>
    <property type="match status" value="1"/>
</dbReference>
<sequence>MSIKEQSLMTPYLQFDRSQWAALRDSVPMTLTEDEIAQLKGINEDLSLEEVAEIYLPLSRLLNFYISSNLRRQAVLEQFLGTNGQRIPYIISIAGSVAVGKSTTARVLQALLSRWPEHRRVELITTDGFLHPNQVLKERGLMKKKGFPESYDMHRLVKFVSDLKSGVPNVTAPVYSHLIYDVIPEGDKTVAQPDILILEGLNVLQSGMDYPHDPHHVFVSDFVDFSIYVDAPEELLQTWYINRFLKFREGAFTDPDSYFHNYAKLSKEEAVNTAASLWKEINWLNLKQNILPTRERASLIMTKSANHAVEQVRLRK</sequence>